<dbReference type="EC" id="3.5.1.5" evidence="1"/>
<dbReference type="EMBL" id="CP000255">
    <property type="protein sequence ID" value="ABD22506.1"/>
    <property type="molecule type" value="Genomic_DNA"/>
</dbReference>
<dbReference type="RefSeq" id="WP_000008673.1">
    <property type="nucleotide sequence ID" value="NZ_CP027476.1"/>
</dbReference>
<dbReference type="SMR" id="Q2FEK3"/>
<dbReference type="MEROPS" id="M38.982"/>
<dbReference type="KEGG" id="saa:SAUSA300_2240"/>
<dbReference type="HOGENOM" id="CLU_000980_0_0_9"/>
<dbReference type="OMA" id="DTMDGVH"/>
<dbReference type="UniPathway" id="UPA00258">
    <property type="reaction ID" value="UER00370"/>
</dbReference>
<dbReference type="Proteomes" id="UP000001939">
    <property type="component" value="Chromosome"/>
</dbReference>
<dbReference type="GO" id="GO:0005737">
    <property type="term" value="C:cytoplasm"/>
    <property type="evidence" value="ECO:0007669"/>
    <property type="project" value="UniProtKB-SubCell"/>
</dbReference>
<dbReference type="GO" id="GO:0016151">
    <property type="term" value="F:nickel cation binding"/>
    <property type="evidence" value="ECO:0007669"/>
    <property type="project" value="UniProtKB-UniRule"/>
</dbReference>
<dbReference type="GO" id="GO:0009039">
    <property type="term" value="F:urease activity"/>
    <property type="evidence" value="ECO:0007669"/>
    <property type="project" value="UniProtKB-UniRule"/>
</dbReference>
<dbReference type="GO" id="GO:0043419">
    <property type="term" value="P:urea catabolic process"/>
    <property type="evidence" value="ECO:0007669"/>
    <property type="project" value="UniProtKB-UniRule"/>
</dbReference>
<dbReference type="CDD" id="cd00375">
    <property type="entry name" value="Urease_alpha"/>
    <property type="match status" value="1"/>
</dbReference>
<dbReference type="Gene3D" id="3.20.20.140">
    <property type="entry name" value="Metal-dependent hydrolases"/>
    <property type="match status" value="1"/>
</dbReference>
<dbReference type="Gene3D" id="2.30.40.10">
    <property type="entry name" value="Urease, subunit C, domain 1"/>
    <property type="match status" value="1"/>
</dbReference>
<dbReference type="HAMAP" id="MF_01953">
    <property type="entry name" value="Urease_alpha"/>
    <property type="match status" value="1"/>
</dbReference>
<dbReference type="InterPro" id="IPR006680">
    <property type="entry name" value="Amidohydro-rel"/>
</dbReference>
<dbReference type="InterPro" id="IPR011059">
    <property type="entry name" value="Metal-dep_hydrolase_composite"/>
</dbReference>
<dbReference type="InterPro" id="IPR032466">
    <property type="entry name" value="Metal_Hydrolase"/>
</dbReference>
<dbReference type="InterPro" id="IPR011612">
    <property type="entry name" value="Urease_alpha_N_dom"/>
</dbReference>
<dbReference type="InterPro" id="IPR050112">
    <property type="entry name" value="Urease_alpha_subunit"/>
</dbReference>
<dbReference type="InterPro" id="IPR017950">
    <property type="entry name" value="Urease_AS"/>
</dbReference>
<dbReference type="InterPro" id="IPR005848">
    <property type="entry name" value="Urease_asu"/>
</dbReference>
<dbReference type="InterPro" id="IPR017951">
    <property type="entry name" value="Urease_asu_c"/>
</dbReference>
<dbReference type="InterPro" id="IPR029754">
    <property type="entry name" value="Urease_Ni-bd"/>
</dbReference>
<dbReference type="NCBIfam" id="NF009686">
    <property type="entry name" value="PRK13207.1"/>
    <property type="match status" value="1"/>
</dbReference>
<dbReference type="NCBIfam" id="TIGR01792">
    <property type="entry name" value="urease_alph"/>
    <property type="match status" value="1"/>
</dbReference>
<dbReference type="PANTHER" id="PTHR43440">
    <property type="entry name" value="UREASE"/>
    <property type="match status" value="1"/>
</dbReference>
<dbReference type="PANTHER" id="PTHR43440:SF1">
    <property type="entry name" value="UREASE"/>
    <property type="match status" value="1"/>
</dbReference>
<dbReference type="Pfam" id="PF01979">
    <property type="entry name" value="Amidohydro_1"/>
    <property type="match status" value="1"/>
</dbReference>
<dbReference type="Pfam" id="PF00449">
    <property type="entry name" value="Urease_alpha"/>
    <property type="match status" value="1"/>
</dbReference>
<dbReference type="PRINTS" id="PR01752">
    <property type="entry name" value="UREASE"/>
</dbReference>
<dbReference type="SUPFAM" id="SSF51338">
    <property type="entry name" value="Composite domain of metallo-dependent hydrolases"/>
    <property type="match status" value="1"/>
</dbReference>
<dbReference type="SUPFAM" id="SSF51556">
    <property type="entry name" value="Metallo-dependent hydrolases"/>
    <property type="match status" value="1"/>
</dbReference>
<dbReference type="PROSITE" id="PS01120">
    <property type="entry name" value="UREASE_1"/>
    <property type="match status" value="1"/>
</dbReference>
<dbReference type="PROSITE" id="PS00145">
    <property type="entry name" value="UREASE_2"/>
    <property type="match status" value="1"/>
</dbReference>
<dbReference type="PROSITE" id="PS51368">
    <property type="entry name" value="UREASE_3"/>
    <property type="match status" value="1"/>
</dbReference>
<keyword id="KW-0963">Cytoplasm</keyword>
<keyword id="KW-0378">Hydrolase</keyword>
<keyword id="KW-0479">Metal-binding</keyword>
<keyword id="KW-0533">Nickel</keyword>
<name>URE1_STAA3</name>
<comment type="catalytic activity">
    <reaction evidence="1">
        <text>urea + 2 H2O + H(+) = hydrogencarbonate + 2 NH4(+)</text>
        <dbReference type="Rhea" id="RHEA:20557"/>
        <dbReference type="ChEBI" id="CHEBI:15377"/>
        <dbReference type="ChEBI" id="CHEBI:15378"/>
        <dbReference type="ChEBI" id="CHEBI:16199"/>
        <dbReference type="ChEBI" id="CHEBI:17544"/>
        <dbReference type="ChEBI" id="CHEBI:28938"/>
        <dbReference type="EC" id="3.5.1.5"/>
    </reaction>
</comment>
<comment type="cofactor">
    <cofactor evidence="1">
        <name>Ni cation</name>
        <dbReference type="ChEBI" id="CHEBI:25516"/>
    </cofactor>
    <text evidence="1">Binds 2 nickel ions per subunit.</text>
</comment>
<comment type="pathway">
    <text evidence="1">Nitrogen metabolism; urea degradation; CO(2) and NH(3) from urea (urease route): step 1/1.</text>
</comment>
<comment type="subunit">
    <text evidence="1">Heterotrimer of UreA (gamma), UreB (beta) and UreC (alpha) subunits. Three heterotrimers associate to form the active enzyme.</text>
</comment>
<comment type="subcellular location">
    <subcellularLocation>
        <location evidence="1">Cytoplasm</location>
    </subcellularLocation>
</comment>
<comment type="PTM">
    <text evidence="1">Carboxylation allows a single lysine to coordinate two nickel ions.</text>
</comment>
<comment type="similarity">
    <text evidence="1">Belongs to the metallo-dependent hydrolases superfamily. Urease alpha subunit family.</text>
</comment>
<feature type="chain" id="PRO_0000239887" description="Urease subunit alpha">
    <location>
        <begin position="1"/>
        <end position="571"/>
    </location>
</feature>
<feature type="domain" description="Urease" evidence="1">
    <location>
        <begin position="133"/>
        <end position="571"/>
    </location>
</feature>
<feature type="active site" description="Proton donor" evidence="1">
    <location>
        <position position="324"/>
    </location>
</feature>
<feature type="binding site" evidence="1">
    <location>
        <position position="138"/>
    </location>
    <ligand>
        <name>Ni(2+)</name>
        <dbReference type="ChEBI" id="CHEBI:49786"/>
        <label>1</label>
    </ligand>
</feature>
<feature type="binding site" evidence="1">
    <location>
        <position position="140"/>
    </location>
    <ligand>
        <name>Ni(2+)</name>
        <dbReference type="ChEBI" id="CHEBI:49786"/>
        <label>1</label>
    </ligand>
</feature>
<feature type="binding site" description="via carbamate group" evidence="1">
    <location>
        <position position="221"/>
    </location>
    <ligand>
        <name>Ni(2+)</name>
        <dbReference type="ChEBI" id="CHEBI:49786"/>
        <label>1</label>
    </ligand>
</feature>
<feature type="binding site" description="via carbamate group" evidence="1">
    <location>
        <position position="221"/>
    </location>
    <ligand>
        <name>Ni(2+)</name>
        <dbReference type="ChEBI" id="CHEBI:49786"/>
        <label>2</label>
    </ligand>
</feature>
<feature type="binding site" evidence="1">
    <location>
        <position position="223"/>
    </location>
    <ligand>
        <name>substrate</name>
    </ligand>
</feature>
<feature type="binding site" evidence="1">
    <location>
        <position position="250"/>
    </location>
    <ligand>
        <name>Ni(2+)</name>
        <dbReference type="ChEBI" id="CHEBI:49786"/>
        <label>2</label>
    </ligand>
</feature>
<feature type="binding site" evidence="1">
    <location>
        <position position="276"/>
    </location>
    <ligand>
        <name>Ni(2+)</name>
        <dbReference type="ChEBI" id="CHEBI:49786"/>
        <label>2</label>
    </ligand>
</feature>
<feature type="binding site" evidence="1">
    <location>
        <position position="364"/>
    </location>
    <ligand>
        <name>Ni(2+)</name>
        <dbReference type="ChEBI" id="CHEBI:49786"/>
        <label>1</label>
    </ligand>
</feature>
<feature type="modified residue" description="N6-carboxylysine" evidence="1">
    <location>
        <position position="221"/>
    </location>
</feature>
<sequence>MSFKMTQNQYTSLYGPTVGDSIRLGDTNLFAQIEKDYAVYGEEATFGGGKSIRDGMAQNPRVTRDDVNVADLVISNAVIIDYDKVVKADIGIKNGYIFAIGNAGNPDIMDNVDIIIGSTTDIIAAEGKIVTAGGIDTHVHFINPEQAEVALESGITTHIGGGTGASEGSKATTVTPGPWHIHRMLEAAEGLPINVGFTGKGQATNPTALIEQINAGAIGLKVHEDWGATPSALSHALDVADEFDVQIALHADTLNEAGFMEDTMAAVKDRVLHMYHTEGAGGGHAPDLIKSAAFSNILPSSTNPTLPYTHNTVDEHLDMVMITHHLNAAIPEDIAFADSRIRKETIAAEDVLQDMGVFSMISSDSQAMGRVGEVITRTWQVAHRMKEQRGPLDGDFEHNDNNRIKRYIAKYTINPAITHGISEYVGSIEPGKLADIVLWDPIFFGVKPELVVKGGLINSAVNGDANGSIPTSEPMKYRKMYGQYGGNLTSTSMTFVSKTAYENGINRALNLKRMVRPVKNIRQLSKADMKNNSATPKLDVDPQTYEVYVDGEKITSNAATELPLTQRYFLF</sequence>
<evidence type="ECO:0000255" key="1">
    <source>
        <dbReference type="HAMAP-Rule" id="MF_01953"/>
    </source>
</evidence>
<reference key="1">
    <citation type="journal article" date="2006" name="Lancet">
        <title>Complete genome sequence of USA300, an epidemic clone of community-acquired meticillin-resistant Staphylococcus aureus.</title>
        <authorList>
            <person name="Diep B.A."/>
            <person name="Gill S.R."/>
            <person name="Chang R.F."/>
            <person name="Phan T.H."/>
            <person name="Chen J.H."/>
            <person name="Davidson M.G."/>
            <person name="Lin F."/>
            <person name="Lin J."/>
            <person name="Carleton H.A."/>
            <person name="Mongodin E.F."/>
            <person name="Sensabaugh G.F."/>
            <person name="Perdreau-Remington F."/>
        </authorList>
    </citation>
    <scope>NUCLEOTIDE SEQUENCE [LARGE SCALE GENOMIC DNA]</scope>
    <source>
        <strain>USA300</strain>
    </source>
</reference>
<proteinExistence type="inferred from homology"/>
<protein>
    <recommendedName>
        <fullName evidence="1">Urease subunit alpha</fullName>
        <ecNumber evidence="1">3.5.1.5</ecNumber>
    </recommendedName>
    <alternativeName>
        <fullName evidence="1">Urea amidohydrolase subunit alpha</fullName>
    </alternativeName>
</protein>
<organism>
    <name type="scientific">Staphylococcus aureus (strain USA300)</name>
    <dbReference type="NCBI Taxonomy" id="367830"/>
    <lineage>
        <taxon>Bacteria</taxon>
        <taxon>Bacillati</taxon>
        <taxon>Bacillota</taxon>
        <taxon>Bacilli</taxon>
        <taxon>Bacillales</taxon>
        <taxon>Staphylococcaceae</taxon>
        <taxon>Staphylococcus</taxon>
    </lineage>
</organism>
<accession>Q2FEK3</accession>
<gene>
    <name evidence="1" type="primary">ureC</name>
    <name type="ordered locus">SAUSA300_2240</name>
</gene>